<dbReference type="EMBL" id="BA000031">
    <property type="protein sequence ID" value="BAC58760.1"/>
    <property type="molecule type" value="Genomic_DNA"/>
</dbReference>
<dbReference type="RefSeq" id="NP_796876.1">
    <property type="nucleotide sequence ID" value="NC_004603.1"/>
</dbReference>
<dbReference type="RefSeq" id="WP_005459053.1">
    <property type="nucleotide sequence ID" value="NC_004603.1"/>
</dbReference>
<dbReference type="SMR" id="Q87SC7"/>
<dbReference type="GeneID" id="1187965"/>
<dbReference type="KEGG" id="vpa:VP0497"/>
<dbReference type="PATRIC" id="fig|223926.6.peg.474"/>
<dbReference type="eggNOG" id="COG3445">
    <property type="taxonomic scope" value="Bacteria"/>
</dbReference>
<dbReference type="HOGENOM" id="CLU_133780_0_0_6"/>
<dbReference type="Proteomes" id="UP000002493">
    <property type="component" value="Chromosome 1"/>
</dbReference>
<dbReference type="GO" id="GO:0005829">
    <property type="term" value="C:cytosol"/>
    <property type="evidence" value="ECO:0007669"/>
    <property type="project" value="TreeGrafter"/>
</dbReference>
<dbReference type="GO" id="GO:0008861">
    <property type="term" value="F:formate C-acetyltransferase activity"/>
    <property type="evidence" value="ECO:0007669"/>
    <property type="project" value="TreeGrafter"/>
</dbReference>
<dbReference type="FunFam" id="3.20.70.20:FF:000002">
    <property type="entry name" value="Autonomous glycyl radical cofactor"/>
    <property type="match status" value="1"/>
</dbReference>
<dbReference type="Gene3D" id="3.20.70.20">
    <property type="match status" value="1"/>
</dbReference>
<dbReference type="HAMAP" id="MF_00806">
    <property type="entry name" value="GrcA"/>
    <property type="match status" value="1"/>
</dbReference>
<dbReference type="InterPro" id="IPR050244">
    <property type="entry name" value="Auton_GlycylRad_Cofactor"/>
</dbReference>
<dbReference type="InterPro" id="IPR019777">
    <property type="entry name" value="Form_AcTrfase_GR_CS"/>
</dbReference>
<dbReference type="InterPro" id="IPR001150">
    <property type="entry name" value="Gly_radical"/>
</dbReference>
<dbReference type="InterPro" id="IPR011140">
    <property type="entry name" value="Glycyl_radical_cofactor_GrcA"/>
</dbReference>
<dbReference type="NCBIfam" id="TIGR04365">
    <property type="entry name" value="spare_glycyl"/>
    <property type="match status" value="1"/>
</dbReference>
<dbReference type="PANTHER" id="PTHR30191">
    <property type="entry name" value="FORMATE ACETYLTRANSFERASE"/>
    <property type="match status" value="1"/>
</dbReference>
<dbReference type="PANTHER" id="PTHR30191:SF0">
    <property type="entry name" value="FORMATE ACETYLTRANSFERASE 1"/>
    <property type="match status" value="1"/>
</dbReference>
<dbReference type="Pfam" id="PF01228">
    <property type="entry name" value="Gly_radical"/>
    <property type="match status" value="1"/>
</dbReference>
<dbReference type="PIRSF" id="PIRSF000378">
    <property type="entry name" value="Gly_radicl_yfiD"/>
    <property type="match status" value="1"/>
</dbReference>
<dbReference type="SUPFAM" id="SSF51998">
    <property type="entry name" value="PFL-like glycyl radical enzymes"/>
    <property type="match status" value="1"/>
</dbReference>
<dbReference type="PROSITE" id="PS00850">
    <property type="entry name" value="GLY_RADICAL_1"/>
    <property type="match status" value="1"/>
</dbReference>
<dbReference type="PROSITE" id="PS51149">
    <property type="entry name" value="GLY_RADICAL_2"/>
    <property type="match status" value="1"/>
</dbReference>
<gene>
    <name evidence="1" type="primary">grcA</name>
    <name type="ordered locus">VP0497</name>
</gene>
<feature type="chain" id="PRO_0000166712" description="Autonomous glycyl radical cofactor">
    <location>
        <begin position="1"/>
        <end position="125"/>
    </location>
</feature>
<feature type="domain" description="Glycine radical" evidence="1">
    <location>
        <begin position="5"/>
        <end position="125"/>
    </location>
</feature>
<feature type="modified residue" description="Glycine radical" evidence="1">
    <location>
        <position position="100"/>
    </location>
</feature>
<accession>Q87SC7</accession>
<evidence type="ECO:0000255" key="1">
    <source>
        <dbReference type="HAMAP-Rule" id="MF_00806"/>
    </source>
</evidence>
<keyword id="KW-0556">Organic radical</keyword>
<name>GRCA_VIBPA</name>
<reference key="1">
    <citation type="journal article" date="2003" name="Lancet">
        <title>Genome sequence of Vibrio parahaemolyticus: a pathogenic mechanism distinct from that of V. cholerae.</title>
        <authorList>
            <person name="Makino K."/>
            <person name="Oshima K."/>
            <person name="Kurokawa K."/>
            <person name="Yokoyama K."/>
            <person name="Uda T."/>
            <person name="Tagomori K."/>
            <person name="Iijima Y."/>
            <person name="Najima M."/>
            <person name="Nakano M."/>
            <person name="Yamashita A."/>
            <person name="Kubota Y."/>
            <person name="Kimura S."/>
            <person name="Yasunaga T."/>
            <person name="Honda T."/>
            <person name="Shinagawa H."/>
            <person name="Hattori M."/>
            <person name="Iida T."/>
        </authorList>
    </citation>
    <scope>NUCLEOTIDE SEQUENCE [LARGE SCALE GENOMIC DNA]</scope>
    <source>
        <strain>RIMD 2210633</strain>
    </source>
</reference>
<comment type="function">
    <text evidence="1">Acts as a radical domain for damaged PFL and possibly other radical proteins.</text>
</comment>
<sequence length="125" mass="13929">MIQGIQITKAANDELLNSIWLLDSEKNEARCVAAATGYEADQVIAISDLGEYESREVAIETAPRIEGGQHLNVNVLKRETLEDAVAHPEKYPQLTIRVSGYAVRFNSLTPEQQRDVIARTFTETL</sequence>
<proteinExistence type="inferred from homology"/>
<protein>
    <recommendedName>
        <fullName evidence="1">Autonomous glycyl radical cofactor</fullName>
    </recommendedName>
</protein>
<organism>
    <name type="scientific">Vibrio parahaemolyticus serotype O3:K6 (strain RIMD 2210633)</name>
    <dbReference type="NCBI Taxonomy" id="223926"/>
    <lineage>
        <taxon>Bacteria</taxon>
        <taxon>Pseudomonadati</taxon>
        <taxon>Pseudomonadota</taxon>
        <taxon>Gammaproteobacteria</taxon>
        <taxon>Vibrionales</taxon>
        <taxon>Vibrionaceae</taxon>
        <taxon>Vibrio</taxon>
    </lineage>
</organism>